<evidence type="ECO:0000255" key="1">
    <source>
        <dbReference type="HAMAP-Rule" id="MF_00040"/>
    </source>
</evidence>
<proteinExistence type="inferred from homology"/>
<name>RRF_PSEPK</name>
<protein>
    <recommendedName>
        <fullName evidence="1">Ribosome-recycling factor</fullName>
        <shortName evidence="1">RRF</shortName>
    </recommendedName>
    <alternativeName>
        <fullName evidence="1">Ribosome-releasing factor</fullName>
    </alternativeName>
</protein>
<keyword id="KW-0963">Cytoplasm</keyword>
<keyword id="KW-0648">Protein biosynthesis</keyword>
<keyword id="KW-1185">Reference proteome</keyword>
<feature type="chain" id="PRO_0000167520" description="Ribosome-recycling factor">
    <location>
        <begin position="1"/>
        <end position="185"/>
    </location>
</feature>
<gene>
    <name evidence="1" type="primary">frr</name>
    <name type="ordered locus">PP_1594</name>
</gene>
<dbReference type="EMBL" id="AE015451">
    <property type="protein sequence ID" value="AAN67215.1"/>
    <property type="molecule type" value="Genomic_DNA"/>
</dbReference>
<dbReference type="RefSeq" id="NP_743751.1">
    <property type="nucleotide sequence ID" value="NC_002947.4"/>
</dbReference>
<dbReference type="RefSeq" id="WP_003252296.1">
    <property type="nucleotide sequence ID" value="NZ_CP169744.1"/>
</dbReference>
<dbReference type="SMR" id="Q88MH7"/>
<dbReference type="STRING" id="160488.PP_1594"/>
<dbReference type="PaxDb" id="160488-PP_1594"/>
<dbReference type="GeneID" id="83681926"/>
<dbReference type="KEGG" id="ppu:PP_1594"/>
<dbReference type="PATRIC" id="fig|160488.4.peg.1685"/>
<dbReference type="eggNOG" id="COG0233">
    <property type="taxonomic scope" value="Bacteria"/>
</dbReference>
<dbReference type="HOGENOM" id="CLU_073981_2_0_6"/>
<dbReference type="OrthoDB" id="9804006at2"/>
<dbReference type="PhylomeDB" id="Q88MH7"/>
<dbReference type="BioCyc" id="PPUT160488:G1G01-1691-MONOMER"/>
<dbReference type="Proteomes" id="UP000000556">
    <property type="component" value="Chromosome"/>
</dbReference>
<dbReference type="GO" id="GO:0005829">
    <property type="term" value="C:cytosol"/>
    <property type="evidence" value="ECO:0007669"/>
    <property type="project" value="GOC"/>
</dbReference>
<dbReference type="GO" id="GO:0043023">
    <property type="term" value="F:ribosomal large subunit binding"/>
    <property type="evidence" value="ECO:0007669"/>
    <property type="project" value="TreeGrafter"/>
</dbReference>
<dbReference type="GO" id="GO:0002184">
    <property type="term" value="P:cytoplasmic translational termination"/>
    <property type="evidence" value="ECO:0007669"/>
    <property type="project" value="TreeGrafter"/>
</dbReference>
<dbReference type="CDD" id="cd00520">
    <property type="entry name" value="RRF"/>
    <property type="match status" value="1"/>
</dbReference>
<dbReference type="FunFam" id="1.10.132.20:FF:000001">
    <property type="entry name" value="Ribosome-recycling factor"/>
    <property type="match status" value="1"/>
</dbReference>
<dbReference type="FunFam" id="3.30.1360.40:FF:000001">
    <property type="entry name" value="Ribosome-recycling factor"/>
    <property type="match status" value="1"/>
</dbReference>
<dbReference type="Gene3D" id="3.30.1360.40">
    <property type="match status" value="1"/>
</dbReference>
<dbReference type="Gene3D" id="1.10.132.20">
    <property type="entry name" value="Ribosome-recycling factor"/>
    <property type="match status" value="1"/>
</dbReference>
<dbReference type="HAMAP" id="MF_00040">
    <property type="entry name" value="RRF"/>
    <property type="match status" value="1"/>
</dbReference>
<dbReference type="InterPro" id="IPR002661">
    <property type="entry name" value="Ribosome_recyc_fac"/>
</dbReference>
<dbReference type="InterPro" id="IPR023584">
    <property type="entry name" value="Ribosome_recyc_fac_dom"/>
</dbReference>
<dbReference type="InterPro" id="IPR036191">
    <property type="entry name" value="RRF_sf"/>
</dbReference>
<dbReference type="NCBIfam" id="TIGR00496">
    <property type="entry name" value="frr"/>
    <property type="match status" value="1"/>
</dbReference>
<dbReference type="PANTHER" id="PTHR20982:SF3">
    <property type="entry name" value="MITOCHONDRIAL RIBOSOME RECYCLING FACTOR PSEUDO 1"/>
    <property type="match status" value="1"/>
</dbReference>
<dbReference type="PANTHER" id="PTHR20982">
    <property type="entry name" value="RIBOSOME RECYCLING FACTOR"/>
    <property type="match status" value="1"/>
</dbReference>
<dbReference type="Pfam" id="PF01765">
    <property type="entry name" value="RRF"/>
    <property type="match status" value="1"/>
</dbReference>
<dbReference type="SUPFAM" id="SSF55194">
    <property type="entry name" value="Ribosome recycling factor, RRF"/>
    <property type="match status" value="1"/>
</dbReference>
<comment type="function">
    <text evidence="1">Responsible for the release of ribosomes from messenger RNA at the termination of protein biosynthesis. May increase the efficiency of translation by recycling ribosomes from one round of translation to another.</text>
</comment>
<comment type="subcellular location">
    <subcellularLocation>
        <location evidence="1">Cytoplasm</location>
    </subcellularLocation>
</comment>
<comment type="similarity">
    <text evidence="1">Belongs to the RRF family.</text>
</comment>
<reference key="1">
    <citation type="journal article" date="2002" name="Environ. Microbiol.">
        <title>Complete genome sequence and comparative analysis of the metabolically versatile Pseudomonas putida KT2440.</title>
        <authorList>
            <person name="Nelson K.E."/>
            <person name="Weinel C."/>
            <person name="Paulsen I.T."/>
            <person name="Dodson R.J."/>
            <person name="Hilbert H."/>
            <person name="Martins dos Santos V.A.P."/>
            <person name="Fouts D.E."/>
            <person name="Gill S.R."/>
            <person name="Pop M."/>
            <person name="Holmes M."/>
            <person name="Brinkac L.M."/>
            <person name="Beanan M.J."/>
            <person name="DeBoy R.T."/>
            <person name="Daugherty S.C."/>
            <person name="Kolonay J.F."/>
            <person name="Madupu R."/>
            <person name="Nelson W.C."/>
            <person name="White O."/>
            <person name="Peterson J.D."/>
            <person name="Khouri H.M."/>
            <person name="Hance I."/>
            <person name="Chris Lee P."/>
            <person name="Holtzapple E.K."/>
            <person name="Scanlan D."/>
            <person name="Tran K."/>
            <person name="Moazzez A."/>
            <person name="Utterback T.R."/>
            <person name="Rizzo M."/>
            <person name="Lee K."/>
            <person name="Kosack D."/>
            <person name="Moestl D."/>
            <person name="Wedler H."/>
            <person name="Lauber J."/>
            <person name="Stjepandic D."/>
            <person name="Hoheisel J."/>
            <person name="Straetz M."/>
            <person name="Heim S."/>
            <person name="Kiewitz C."/>
            <person name="Eisen J.A."/>
            <person name="Timmis K.N."/>
            <person name="Duesterhoeft A."/>
            <person name="Tuemmler B."/>
            <person name="Fraser C.M."/>
        </authorList>
    </citation>
    <scope>NUCLEOTIDE SEQUENCE [LARGE SCALE GENOMIC DNA]</scope>
    <source>
        <strain>ATCC 47054 / DSM 6125 / CFBP 8728 / NCIMB 11950 / KT2440</strain>
    </source>
</reference>
<organism>
    <name type="scientific">Pseudomonas putida (strain ATCC 47054 / DSM 6125 / CFBP 8728 / NCIMB 11950 / KT2440)</name>
    <dbReference type="NCBI Taxonomy" id="160488"/>
    <lineage>
        <taxon>Bacteria</taxon>
        <taxon>Pseudomonadati</taxon>
        <taxon>Pseudomonadota</taxon>
        <taxon>Gammaproteobacteria</taxon>
        <taxon>Pseudomonadales</taxon>
        <taxon>Pseudomonadaceae</taxon>
        <taxon>Pseudomonas</taxon>
    </lineage>
</organism>
<sequence length="185" mass="20152">MINDIKKDAQERMGKSIEALSRNLAAIRTGRAHPSILDSVKVTAWGSEMPLNQVAAITVEDARTLKIVAHDKNLSAAIEKAILTSDLGLNPSSAGTTIRVPMPALTEETRKGYTKQASGVAEDAKVAVRNVRRDALADLKKLTKDKEISEDEERRAADEIQKLTDKFVAEVDAAFKAKEKDLMAV</sequence>
<accession>Q88MH7</accession>